<feature type="signal peptide" evidence="1">
    <location>
        <begin position="1"/>
        <end position="26"/>
    </location>
</feature>
<feature type="chain" id="PRO_0000005313" description="Endochitinase CH5B">
    <location>
        <begin position="27"/>
        <end position="316"/>
    </location>
</feature>
<feature type="propeptide" id="PRO_0000005314" description="Removed in mature form" evidence="4">
    <location>
        <begin position="317"/>
        <end position="327"/>
    </location>
</feature>
<feature type="domain" description="Chitin-binding type-1" evidence="3">
    <location>
        <begin position="27"/>
        <end position="67"/>
    </location>
</feature>
<feature type="active site" description="Proton donor" evidence="2">
    <location>
        <position position="140"/>
    </location>
</feature>
<feature type="disulfide bond" evidence="3">
    <location>
        <begin position="29"/>
        <end position="44"/>
    </location>
</feature>
<feature type="disulfide bond" evidence="3">
    <location>
        <begin position="38"/>
        <end position="50"/>
    </location>
</feature>
<feature type="disulfide bond" evidence="3">
    <location>
        <begin position="43"/>
        <end position="57"/>
    </location>
</feature>
<feature type="disulfide bond" evidence="3">
    <location>
        <begin position="61"/>
        <end position="65"/>
    </location>
</feature>
<feature type="disulfide bond" evidence="3">
    <location>
        <begin position="96"/>
        <end position="158"/>
    </location>
</feature>
<feature type="disulfide bond" evidence="3">
    <location>
        <begin position="169"/>
        <end position="177"/>
    </location>
</feature>
<feature type="disulfide bond" evidence="3">
    <location>
        <begin position="276"/>
        <end position="308"/>
    </location>
</feature>
<proteinExistence type="inferred from homology"/>
<dbReference type="EC" id="3.2.1.14"/>
<dbReference type="EMBL" id="S43926">
    <property type="protein sequence ID" value="AAB23263.1"/>
    <property type="molecule type" value="Genomic_DNA"/>
</dbReference>
<dbReference type="PIR" id="JQ0965">
    <property type="entry name" value="JQ0965"/>
</dbReference>
<dbReference type="RefSeq" id="XP_007137309.1">
    <property type="nucleotide sequence ID" value="XM_007137247.1"/>
</dbReference>
<dbReference type="RefSeq" id="XP_068479888.1">
    <property type="nucleotide sequence ID" value="XM_068623787.1"/>
</dbReference>
<dbReference type="SMR" id="P36361"/>
<dbReference type="CAZy" id="CBM18">
    <property type="family name" value="Carbohydrate-Binding Module Family 18"/>
</dbReference>
<dbReference type="CAZy" id="GH19">
    <property type="family name" value="Glycoside Hydrolase Family 19"/>
</dbReference>
<dbReference type="EnsemblPlants" id="ESW09303">
    <property type="protein sequence ID" value="ESW09303"/>
    <property type="gene ID" value="PHAVU_009G116600g"/>
</dbReference>
<dbReference type="GeneID" id="137820019"/>
<dbReference type="Gramene" id="ESW09303">
    <property type="protein sequence ID" value="ESW09303"/>
    <property type="gene ID" value="PHAVU_009G116600g"/>
</dbReference>
<dbReference type="eggNOG" id="KOG4742">
    <property type="taxonomic scope" value="Eukaryota"/>
</dbReference>
<dbReference type="OMA" id="VITERWN"/>
<dbReference type="OrthoDB" id="5985073at2759"/>
<dbReference type="GO" id="GO:0005773">
    <property type="term" value="C:vacuole"/>
    <property type="evidence" value="ECO:0007669"/>
    <property type="project" value="UniProtKB-SubCell"/>
</dbReference>
<dbReference type="GO" id="GO:0008061">
    <property type="term" value="F:chitin binding"/>
    <property type="evidence" value="ECO:0007669"/>
    <property type="project" value="UniProtKB-KW"/>
</dbReference>
<dbReference type="GO" id="GO:0008843">
    <property type="term" value="F:endochitinase activity"/>
    <property type="evidence" value="ECO:0007669"/>
    <property type="project" value="UniProtKB-EC"/>
</dbReference>
<dbReference type="GO" id="GO:0016998">
    <property type="term" value="P:cell wall macromolecule catabolic process"/>
    <property type="evidence" value="ECO:0007669"/>
    <property type="project" value="InterPro"/>
</dbReference>
<dbReference type="GO" id="GO:0006032">
    <property type="term" value="P:chitin catabolic process"/>
    <property type="evidence" value="ECO:0007669"/>
    <property type="project" value="UniProtKB-KW"/>
</dbReference>
<dbReference type="GO" id="GO:0050832">
    <property type="term" value="P:defense response to fungus"/>
    <property type="evidence" value="ECO:0007669"/>
    <property type="project" value="TreeGrafter"/>
</dbReference>
<dbReference type="GO" id="GO:0000272">
    <property type="term" value="P:polysaccharide catabolic process"/>
    <property type="evidence" value="ECO:0007669"/>
    <property type="project" value="UniProtKB-KW"/>
</dbReference>
<dbReference type="CDD" id="cd00325">
    <property type="entry name" value="chitinase_GH19"/>
    <property type="match status" value="1"/>
</dbReference>
<dbReference type="CDD" id="cd06921">
    <property type="entry name" value="ChtBD1_GH19_hevein"/>
    <property type="match status" value="1"/>
</dbReference>
<dbReference type="FunFam" id="3.30.60.10:FF:000001">
    <property type="entry name" value="Basic endochitinase"/>
    <property type="match status" value="1"/>
</dbReference>
<dbReference type="FunFam" id="3.30.20.10:FF:000001">
    <property type="entry name" value="Endochitinase (Chitinase)"/>
    <property type="match status" value="1"/>
</dbReference>
<dbReference type="Gene3D" id="1.10.530.10">
    <property type="match status" value="1"/>
</dbReference>
<dbReference type="Gene3D" id="3.30.20.10">
    <property type="entry name" value="Endochitinase, domain 2"/>
    <property type="match status" value="1"/>
</dbReference>
<dbReference type="Gene3D" id="3.30.60.10">
    <property type="entry name" value="Endochitinase-like"/>
    <property type="match status" value="1"/>
</dbReference>
<dbReference type="InterPro" id="IPR001002">
    <property type="entry name" value="Chitin-bd_1"/>
</dbReference>
<dbReference type="InterPro" id="IPR018371">
    <property type="entry name" value="Chitin-binding_1_CS"/>
</dbReference>
<dbReference type="InterPro" id="IPR036861">
    <property type="entry name" value="Endochitinase-like_sf"/>
</dbReference>
<dbReference type="InterPro" id="IPR016283">
    <property type="entry name" value="Glyco_hydro_19"/>
</dbReference>
<dbReference type="InterPro" id="IPR000726">
    <property type="entry name" value="Glyco_hydro_19_cat"/>
</dbReference>
<dbReference type="InterPro" id="IPR023346">
    <property type="entry name" value="Lysozyme-like_dom_sf"/>
</dbReference>
<dbReference type="PANTHER" id="PTHR22595:SF79">
    <property type="entry name" value="CHITINASE 12"/>
    <property type="match status" value="1"/>
</dbReference>
<dbReference type="PANTHER" id="PTHR22595">
    <property type="entry name" value="CHITINASE-RELATED"/>
    <property type="match status" value="1"/>
</dbReference>
<dbReference type="Pfam" id="PF00187">
    <property type="entry name" value="Chitin_bind_1"/>
    <property type="match status" value="1"/>
</dbReference>
<dbReference type="Pfam" id="PF00182">
    <property type="entry name" value="Glyco_hydro_19"/>
    <property type="match status" value="1"/>
</dbReference>
<dbReference type="PIRSF" id="PIRSF001060">
    <property type="entry name" value="Endochitinase"/>
    <property type="match status" value="1"/>
</dbReference>
<dbReference type="PRINTS" id="PR00451">
    <property type="entry name" value="CHITINBINDNG"/>
</dbReference>
<dbReference type="SMART" id="SM00270">
    <property type="entry name" value="ChtBD1"/>
    <property type="match status" value="1"/>
</dbReference>
<dbReference type="SUPFAM" id="SSF53955">
    <property type="entry name" value="Lysozyme-like"/>
    <property type="match status" value="1"/>
</dbReference>
<dbReference type="SUPFAM" id="SSF57016">
    <property type="entry name" value="Plant lectins/antimicrobial peptides"/>
    <property type="match status" value="1"/>
</dbReference>
<dbReference type="PROSITE" id="PS00026">
    <property type="entry name" value="CHIT_BIND_I_1"/>
    <property type="match status" value="1"/>
</dbReference>
<dbReference type="PROSITE" id="PS50941">
    <property type="entry name" value="CHIT_BIND_I_2"/>
    <property type="match status" value="1"/>
</dbReference>
<dbReference type="PROSITE" id="PS00773">
    <property type="entry name" value="CHITINASE_19_1"/>
    <property type="match status" value="1"/>
</dbReference>
<dbReference type="PROSITE" id="PS00774">
    <property type="entry name" value="CHITINASE_19_2"/>
    <property type="match status" value="1"/>
</dbReference>
<sequence length="327" mass="35291">MKKNRMMIMICSVGVVWMLLVGGSYGEQCGRQAGGALCPGGNCCSQFGWCGSTTDYCGKDCQSQCGGPSPAPTDLSALISRSTFDQVLKHRNDGACPAKGFYTYDAFIAAAKAYPSFGNTGDTATRKREIAAFLGQTSHETTGGWATAPDGPYAWGYCFVRERNPSAYCSATPQFPCAPGQQYYGRGPIQISWNYNYGQCGRAIGVDLLNKPDLVATDSVISFKSALWFWMTAQSPKPSSHDVITSRWTPSSADVAARRLPGYGTVTNIINGGLECGRGQDSRVQDRIGFFKRYCDLLGVGYGNNLDCYSQTPFGNSLFLSDLVTSQ</sequence>
<evidence type="ECO:0000250" key="1"/>
<evidence type="ECO:0000250" key="2">
    <source>
        <dbReference type="UniProtKB" id="P29022"/>
    </source>
</evidence>
<evidence type="ECO:0000255" key="3">
    <source>
        <dbReference type="PROSITE-ProRule" id="PRU00261"/>
    </source>
</evidence>
<evidence type="ECO:0000305" key="4"/>
<accession>P36361</accession>
<reference key="1">
    <citation type="journal article" date="1989" name="Plant Cell">
        <title>Functional analysis of DNA sequences responsible for ethylene regulation of a bean chitinase gene in transgenic tobacco.</title>
        <authorList>
            <person name="Broglie K.E."/>
            <person name="Biddle P."/>
            <person name="Cressman R."/>
            <person name="Broglie R."/>
        </authorList>
    </citation>
    <scope>NUCLEOTIDE SEQUENCE [GENOMIC DNA]</scope>
    <source>
        <strain>cv. Saxa</strain>
    </source>
</reference>
<comment type="function">
    <text>Defense against chitin-containing fungal pathogens.</text>
</comment>
<comment type="catalytic activity">
    <reaction>
        <text>Random endo-hydrolysis of N-acetyl-beta-D-glucosaminide (1-&gt;4)-beta-linkages in chitin and chitodextrins.</text>
        <dbReference type="EC" id="3.2.1.14"/>
    </reaction>
</comment>
<comment type="subcellular location">
    <subcellularLocation>
        <location evidence="1">Vacuole</location>
    </subcellularLocation>
    <text evidence="1">Vacuolar and protoplast.</text>
</comment>
<comment type="similarity">
    <text evidence="4">Belongs to the glycosyl hydrolase 19 family. Chitinase class I subfamily.</text>
</comment>
<name>CHI5_PHAVU</name>
<protein>
    <recommendedName>
        <fullName>Endochitinase CH5B</fullName>
        <ecNumber>3.2.1.14</ecNumber>
    </recommendedName>
</protein>
<keyword id="KW-0119">Carbohydrate metabolism</keyword>
<keyword id="KW-0146">Chitin degradation</keyword>
<keyword id="KW-0147">Chitin-binding</keyword>
<keyword id="KW-1015">Disulfide bond</keyword>
<keyword id="KW-0326">Glycosidase</keyword>
<keyword id="KW-0378">Hydrolase</keyword>
<keyword id="KW-0611">Plant defense</keyword>
<keyword id="KW-0624">Polysaccharide degradation</keyword>
<keyword id="KW-0732">Signal</keyword>
<keyword id="KW-0926">Vacuole</keyword>
<organism>
    <name type="scientific">Phaseolus vulgaris</name>
    <name type="common">Kidney bean</name>
    <name type="synonym">French bean</name>
    <dbReference type="NCBI Taxonomy" id="3885"/>
    <lineage>
        <taxon>Eukaryota</taxon>
        <taxon>Viridiplantae</taxon>
        <taxon>Streptophyta</taxon>
        <taxon>Embryophyta</taxon>
        <taxon>Tracheophyta</taxon>
        <taxon>Spermatophyta</taxon>
        <taxon>Magnoliopsida</taxon>
        <taxon>eudicotyledons</taxon>
        <taxon>Gunneridae</taxon>
        <taxon>Pentapetalae</taxon>
        <taxon>rosids</taxon>
        <taxon>fabids</taxon>
        <taxon>Fabales</taxon>
        <taxon>Fabaceae</taxon>
        <taxon>Papilionoideae</taxon>
        <taxon>50 kb inversion clade</taxon>
        <taxon>NPAAA clade</taxon>
        <taxon>indigoferoid/millettioid clade</taxon>
        <taxon>Phaseoleae</taxon>
        <taxon>Phaseolus</taxon>
    </lineage>
</organism>